<reference key="1">
    <citation type="journal article" date="2006" name="BMC Plant Biol.">
        <title>Rapid and accurate pyrosequencing of angiosperm plastid genomes.</title>
        <authorList>
            <person name="Moore M.J."/>
            <person name="Dhingra A."/>
            <person name="Soltis P.S."/>
            <person name="Shaw R."/>
            <person name="Farmerie W.G."/>
            <person name="Folta K.M."/>
            <person name="Soltis D.E."/>
        </authorList>
    </citation>
    <scope>NUCLEOTIDE SEQUENCE [LARGE SCALE GENOMIC DNA]</scope>
</reference>
<accession>Q09G44</accession>
<evidence type="ECO:0000250" key="1"/>
<evidence type="ECO:0000256" key="2">
    <source>
        <dbReference type="SAM" id="MobiDB-lite"/>
    </source>
</evidence>
<evidence type="ECO:0000305" key="3"/>
<feature type="chain" id="PRO_0000293435" description="Small ribosomal subunit protein uS4c">
    <location>
        <begin position="1"/>
        <end position="201"/>
    </location>
</feature>
<feature type="domain" description="S4 RNA-binding">
    <location>
        <begin position="89"/>
        <end position="149"/>
    </location>
</feature>
<feature type="region of interest" description="Disordered" evidence="2">
    <location>
        <begin position="19"/>
        <end position="38"/>
    </location>
</feature>
<keyword id="KW-0150">Chloroplast</keyword>
<keyword id="KW-0934">Plastid</keyword>
<keyword id="KW-0687">Ribonucleoprotein</keyword>
<keyword id="KW-0689">Ribosomal protein</keyword>
<keyword id="KW-0694">RNA-binding</keyword>
<keyword id="KW-0699">rRNA-binding</keyword>
<name>RR4_PLAOC</name>
<gene>
    <name type="primary">rps4</name>
</gene>
<protein>
    <recommendedName>
        <fullName evidence="3">Small ribosomal subunit protein uS4c</fullName>
    </recommendedName>
    <alternativeName>
        <fullName>30S ribosomal protein S4, chloroplastic</fullName>
    </alternativeName>
</protein>
<proteinExistence type="inferred from homology"/>
<organism>
    <name type="scientific">Platanus occidentalis</name>
    <name type="common">Sycamore</name>
    <name type="synonym">American plane tree</name>
    <dbReference type="NCBI Taxonomy" id="4403"/>
    <lineage>
        <taxon>Eukaryota</taxon>
        <taxon>Viridiplantae</taxon>
        <taxon>Streptophyta</taxon>
        <taxon>Embryophyta</taxon>
        <taxon>Tracheophyta</taxon>
        <taxon>Spermatophyta</taxon>
        <taxon>Magnoliopsida</taxon>
        <taxon>Proteales</taxon>
        <taxon>Platanaceae</taxon>
        <taxon>Platanus</taxon>
    </lineage>
</organism>
<sequence>MSRYRGPRFKKIRRLGALPGLTSKSPKAGSDLRNQLRSGKRSQYRIRLEEKQKLRFHYGLTERQLLKYVRIAGKAKGSTGQVLLQLLEMRLDNILFRLGMASTIPGARQLVNHRHILVNGRIVDIPSYRCKPRDIITTRDEQKSRALIQNYLDSSSHEELPKHLTLHSFQYKGLVNQIIDSKWVGLQINELLVVEYYSRQT</sequence>
<geneLocation type="chloroplast"/>
<dbReference type="EMBL" id="DQ923116">
    <property type="protein sequence ID" value="ABI49780.1"/>
    <property type="molecule type" value="Genomic_DNA"/>
</dbReference>
<dbReference type="RefSeq" id="YP_740567.1">
    <property type="nucleotide sequence ID" value="NC_008335.1"/>
</dbReference>
<dbReference type="SMR" id="Q09G44"/>
<dbReference type="GeneID" id="4271335"/>
<dbReference type="GO" id="GO:0009507">
    <property type="term" value="C:chloroplast"/>
    <property type="evidence" value="ECO:0007669"/>
    <property type="project" value="UniProtKB-SubCell"/>
</dbReference>
<dbReference type="GO" id="GO:0015935">
    <property type="term" value="C:small ribosomal subunit"/>
    <property type="evidence" value="ECO:0007669"/>
    <property type="project" value="InterPro"/>
</dbReference>
<dbReference type="GO" id="GO:0019843">
    <property type="term" value="F:rRNA binding"/>
    <property type="evidence" value="ECO:0007669"/>
    <property type="project" value="UniProtKB-UniRule"/>
</dbReference>
<dbReference type="GO" id="GO:0003735">
    <property type="term" value="F:structural constituent of ribosome"/>
    <property type="evidence" value="ECO:0007669"/>
    <property type="project" value="InterPro"/>
</dbReference>
<dbReference type="GO" id="GO:0042274">
    <property type="term" value="P:ribosomal small subunit biogenesis"/>
    <property type="evidence" value="ECO:0007669"/>
    <property type="project" value="TreeGrafter"/>
</dbReference>
<dbReference type="GO" id="GO:0006412">
    <property type="term" value="P:translation"/>
    <property type="evidence" value="ECO:0007669"/>
    <property type="project" value="UniProtKB-UniRule"/>
</dbReference>
<dbReference type="CDD" id="cd00165">
    <property type="entry name" value="S4"/>
    <property type="match status" value="1"/>
</dbReference>
<dbReference type="FunFam" id="1.10.1050.10:FF:000002">
    <property type="entry name" value="30S ribosomal protein S4, chloroplastic"/>
    <property type="match status" value="1"/>
</dbReference>
<dbReference type="FunFam" id="3.10.290.10:FF:000081">
    <property type="entry name" value="30S ribosomal protein S4, chloroplastic"/>
    <property type="match status" value="1"/>
</dbReference>
<dbReference type="Gene3D" id="1.10.1050.10">
    <property type="entry name" value="Ribosomal Protein S4 Delta 41, Chain A, domain 1"/>
    <property type="match status" value="1"/>
</dbReference>
<dbReference type="Gene3D" id="3.10.290.10">
    <property type="entry name" value="RNA-binding S4 domain"/>
    <property type="match status" value="1"/>
</dbReference>
<dbReference type="HAMAP" id="MF_01306_B">
    <property type="entry name" value="Ribosomal_uS4_B"/>
    <property type="match status" value="1"/>
</dbReference>
<dbReference type="InterPro" id="IPR022801">
    <property type="entry name" value="Ribosomal_uS4"/>
</dbReference>
<dbReference type="InterPro" id="IPR005709">
    <property type="entry name" value="Ribosomal_uS4_bac-type"/>
</dbReference>
<dbReference type="InterPro" id="IPR018079">
    <property type="entry name" value="Ribosomal_uS4_CS"/>
</dbReference>
<dbReference type="InterPro" id="IPR001912">
    <property type="entry name" value="Ribosomal_uS4_N"/>
</dbReference>
<dbReference type="InterPro" id="IPR002942">
    <property type="entry name" value="S4_RNA-bd"/>
</dbReference>
<dbReference type="InterPro" id="IPR036986">
    <property type="entry name" value="S4_RNA-bd_sf"/>
</dbReference>
<dbReference type="NCBIfam" id="NF003717">
    <property type="entry name" value="PRK05327.1"/>
    <property type="match status" value="1"/>
</dbReference>
<dbReference type="NCBIfam" id="TIGR01017">
    <property type="entry name" value="rpsD_bact"/>
    <property type="match status" value="1"/>
</dbReference>
<dbReference type="PANTHER" id="PTHR11831">
    <property type="entry name" value="30S 40S RIBOSOMAL PROTEIN"/>
    <property type="match status" value="1"/>
</dbReference>
<dbReference type="PANTHER" id="PTHR11831:SF4">
    <property type="entry name" value="SMALL RIBOSOMAL SUBUNIT PROTEIN US4M"/>
    <property type="match status" value="1"/>
</dbReference>
<dbReference type="Pfam" id="PF00163">
    <property type="entry name" value="Ribosomal_S4"/>
    <property type="match status" value="1"/>
</dbReference>
<dbReference type="Pfam" id="PF01479">
    <property type="entry name" value="S4"/>
    <property type="match status" value="1"/>
</dbReference>
<dbReference type="SMART" id="SM01390">
    <property type="entry name" value="Ribosomal_S4"/>
    <property type="match status" value="1"/>
</dbReference>
<dbReference type="SMART" id="SM00363">
    <property type="entry name" value="S4"/>
    <property type="match status" value="1"/>
</dbReference>
<dbReference type="SUPFAM" id="SSF55174">
    <property type="entry name" value="Alpha-L RNA-binding motif"/>
    <property type="match status" value="1"/>
</dbReference>
<dbReference type="PROSITE" id="PS00632">
    <property type="entry name" value="RIBOSOMAL_S4"/>
    <property type="match status" value="1"/>
</dbReference>
<dbReference type="PROSITE" id="PS50889">
    <property type="entry name" value="S4"/>
    <property type="match status" value="1"/>
</dbReference>
<comment type="function">
    <text evidence="1">One of the primary rRNA binding proteins, it binds directly to 16S rRNA where it nucleates assembly of the body of the 30S subunit.</text>
</comment>
<comment type="function">
    <text evidence="1">With S5 and S12 plays an important role in translational accuracy.</text>
</comment>
<comment type="subunit">
    <text evidence="1">Part of the 30S ribosomal subunit. Contacts protein S5. The interaction surface between S4 and S5 is involved in control of translational fidelity (By similarity).</text>
</comment>
<comment type="subcellular location">
    <subcellularLocation>
        <location>Plastid</location>
        <location>Chloroplast</location>
    </subcellularLocation>
</comment>
<comment type="similarity">
    <text evidence="3">Belongs to the universal ribosomal protein uS4 family.</text>
</comment>